<gene>
    <name evidence="12" type="primary">Pafah1b3</name>
    <name type="synonym">Pafahg</name>
</gene>
<proteinExistence type="evidence at protein level"/>
<dbReference type="EC" id="3.1.1.47" evidence="8"/>
<dbReference type="EMBL" id="AF016047">
    <property type="protein sequence ID" value="AAC27973.1"/>
    <property type="molecule type" value="mRNA"/>
</dbReference>
<dbReference type="RefSeq" id="NP_446106.1">
    <property type="nucleotide sequence ID" value="NM_053654.3"/>
</dbReference>
<dbReference type="RefSeq" id="XP_006228427.1">
    <property type="nucleotide sequence ID" value="XM_006228365.4"/>
</dbReference>
<dbReference type="RefSeq" id="XP_017444141.1">
    <property type="nucleotide sequence ID" value="XM_017588652.3"/>
</dbReference>
<dbReference type="RefSeq" id="XP_063118429.1">
    <property type="nucleotide sequence ID" value="XM_063262359.1"/>
</dbReference>
<dbReference type="SMR" id="O35263"/>
<dbReference type="FunCoup" id="O35263">
    <property type="interactions" value="1466"/>
</dbReference>
<dbReference type="IntAct" id="O35263">
    <property type="interactions" value="1"/>
</dbReference>
<dbReference type="STRING" id="10116.ENSRNOP00000027774"/>
<dbReference type="PhosphoSitePlus" id="O35263"/>
<dbReference type="jPOST" id="O35263"/>
<dbReference type="PaxDb" id="10116-ENSRNOP00000027774"/>
<dbReference type="Ensembl" id="ENSRNOT00000027774.5">
    <property type="protein sequence ID" value="ENSRNOP00000027774.2"/>
    <property type="gene ID" value="ENSRNOG00000020481.5"/>
</dbReference>
<dbReference type="GeneID" id="114113"/>
<dbReference type="KEGG" id="rno:114113"/>
<dbReference type="UCSC" id="RGD:620333">
    <property type="organism name" value="rat"/>
</dbReference>
<dbReference type="AGR" id="RGD:620333"/>
<dbReference type="CTD" id="5050"/>
<dbReference type="RGD" id="620333">
    <property type="gene designation" value="Pafah1b3"/>
</dbReference>
<dbReference type="eggNOG" id="KOG1388">
    <property type="taxonomic scope" value="Eukaryota"/>
</dbReference>
<dbReference type="GeneTree" id="ENSGT00950000183199"/>
<dbReference type="HOGENOM" id="CLU_051989_2_0_1"/>
<dbReference type="InParanoid" id="O35263"/>
<dbReference type="OMA" id="QTQNVLW"/>
<dbReference type="OrthoDB" id="505607at2759"/>
<dbReference type="PhylomeDB" id="O35263"/>
<dbReference type="TreeFam" id="TF323955"/>
<dbReference type="BRENDA" id="3.1.1.47">
    <property type="organism ID" value="5301"/>
</dbReference>
<dbReference type="Reactome" id="R-RNO-6811436">
    <property type="pathway name" value="COPI-independent Golgi-to-ER retrograde traffic"/>
</dbReference>
<dbReference type="PRO" id="PR:O35263"/>
<dbReference type="Proteomes" id="UP000002494">
    <property type="component" value="Chromosome 1"/>
</dbReference>
<dbReference type="Bgee" id="ENSRNOG00000020481">
    <property type="expression patterns" value="Expressed in jejunum and 19 other cell types or tissues"/>
</dbReference>
<dbReference type="GO" id="GO:0008247">
    <property type="term" value="C:1-alkyl-2-acetylglycerophosphocholine esterase complex"/>
    <property type="evidence" value="ECO:0000314"/>
    <property type="project" value="UniProtKB"/>
</dbReference>
<dbReference type="GO" id="GO:0005737">
    <property type="term" value="C:cytoplasm"/>
    <property type="evidence" value="ECO:0000266"/>
    <property type="project" value="RGD"/>
</dbReference>
<dbReference type="GO" id="GO:0003847">
    <property type="term" value="F:1-alkyl-2-acetylglycerophosphocholine esterase activity"/>
    <property type="evidence" value="ECO:0000314"/>
    <property type="project" value="UniProtKB"/>
</dbReference>
<dbReference type="GO" id="GO:0042802">
    <property type="term" value="F:identical protein binding"/>
    <property type="evidence" value="ECO:0000266"/>
    <property type="project" value="RGD"/>
</dbReference>
<dbReference type="GO" id="GO:0047179">
    <property type="term" value="F:platelet-activating factor acetyltransferase activity"/>
    <property type="evidence" value="ECO:0000304"/>
    <property type="project" value="RGD"/>
</dbReference>
<dbReference type="GO" id="GO:0046982">
    <property type="term" value="F:protein heterodimerization activity"/>
    <property type="evidence" value="ECO:0000250"/>
    <property type="project" value="UniProtKB"/>
</dbReference>
<dbReference type="GO" id="GO:0042803">
    <property type="term" value="F:protein homodimerization activity"/>
    <property type="evidence" value="ECO:0000250"/>
    <property type="project" value="UniProtKB"/>
</dbReference>
<dbReference type="GO" id="GO:0044877">
    <property type="term" value="F:protein-containing complex binding"/>
    <property type="evidence" value="ECO:0000353"/>
    <property type="project" value="RGD"/>
</dbReference>
<dbReference type="GO" id="GO:0016042">
    <property type="term" value="P:lipid catabolic process"/>
    <property type="evidence" value="ECO:0007669"/>
    <property type="project" value="UniProtKB-KW"/>
</dbReference>
<dbReference type="GO" id="GO:0007283">
    <property type="term" value="P:spermatogenesis"/>
    <property type="evidence" value="ECO:0000266"/>
    <property type="project" value="RGD"/>
</dbReference>
<dbReference type="CDD" id="cd01820">
    <property type="entry name" value="PAF_acetylesterase_like"/>
    <property type="match status" value="1"/>
</dbReference>
<dbReference type="FunFam" id="3.40.50.1110:FF:000004">
    <property type="entry name" value="Platelet-activating factor acetylhydrolase IB subunit beta"/>
    <property type="match status" value="1"/>
</dbReference>
<dbReference type="Gene3D" id="3.40.50.1110">
    <property type="entry name" value="SGNH hydrolase"/>
    <property type="match status" value="1"/>
</dbReference>
<dbReference type="InterPro" id="IPR013830">
    <property type="entry name" value="SGNH_hydro"/>
</dbReference>
<dbReference type="InterPro" id="IPR036514">
    <property type="entry name" value="SGNH_hydro_sf"/>
</dbReference>
<dbReference type="PANTHER" id="PTHR11852">
    <property type="entry name" value="PLATELET-ACTIVATING FACTOR ACETYLHYDROLASE"/>
    <property type="match status" value="1"/>
</dbReference>
<dbReference type="PANTHER" id="PTHR11852:SF2">
    <property type="entry name" value="PLATELET-ACTIVATING FACTOR ACETYLHYDROLASE IB SUBUNIT ALPHA1"/>
    <property type="match status" value="1"/>
</dbReference>
<dbReference type="Pfam" id="PF13472">
    <property type="entry name" value="Lipase_GDSL_2"/>
    <property type="match status" value="1"/>
</dbReference>
<dbReference type="SUPFAM" id="SSF52266">
    <property type="entry name" value="SGNH hydrolase"/>
    <property type="match status" value="1"/>
</dbReference>
<evidence type="ECO:0000250" key="1"/>
<evidence type="ECO:0000250" key="2">
    <source>
        <dbReference type="UniProtKB" id="P43034"/>
    </source>
</evidence>
<evidence type="ECO:0000250" key="3">
    <source>
        <dbReference type="UniProtKB" id="P68402"/>
    </source>
</evidence>
<evidence type="ECO:0000250" key="4">
    <source>
        <dbReference type="UniProtKB" id="Q15102"/>
    </source>
</evidence>
<evidence type="ECO:0000250" key="5">
    <source>
        <dbReference type="UniProtKB" id="Q29460"/>
    </source>
</evidence>
<evidence type="ECO:0000250" key="6">
    <source>
        <dbReference type="UniProtKB" id="Q61205"/>
    </source>
</evidence>
<evidence type="ECO:0000256" key="7">
    <source>
        <dbReference type="SAM" id="MobiDB-lite"/>
    </source>
</evidence>
<evidence type="ECO:0000269" key="8">
    <source>
    </source>
</evidence>
<evidence type="ECO:0000303" key="9">
    <source>
    </source>
</evidence>
<evidence type="ECO:0000305" key="10"/>
<evidence type="ECO:0000305" key="11">
    <source>
    </source>
</evidence>
<evidence type="ECO:0000312" key="12">
    <source>
        <dbReference type="RGD" id="620333"/>
    </source>
</evidence>
<accession>O35263</accession>
<keyword id="KW-0007">Acetylation</keyword>
<keyword id="KW-0963">Cytoplasm</keyword>
<keyword id="KW-0378">Hydrolase</keyword>
<keyword id="KW-0442">Lipid degradation</keyword>
<keyword id="KW-0443">Lipid metabolism</keyword>
<keyword id="KW-0597">Phosphoprotein</keyword>
<keyword id="KW-1185">Reference proteome</keyword>
<name>PA1B3_RAT</name>
<sequence>MSGEGENPASKPTPVQDVQGDGRWMSLHHRFVADSKDKEPEVVFIGDSLVQLMHQCEIWRELFSPLHALNFGIGGDSTQHVLWRLENGELEHIRPKIVVVWVGTNNHSHTAEQVTGGIKAIVQLVNKLQPQARVVVLGLLPRGQHPNPLREKNRQVNELVRAALAGYPRAHFLDADPGFVHSDGTISHHDMYDYLHLSRLGYTPVCRALHSLLLRLLAQDQGQGIPLPETAP</sequence>
<organism>
    <name type="scientific">Rattus norvegicus</name>
    <name type="common">Rat</name>
    <dbReference type="NCBI Taxonomy" id="10116"/>
    <lineage>
        <taxon>Eukaryota</taxon>
        <taxon>Metazoa</taxon>
        <taxon>Chordata</taxon>
        <taxon>Craniata</taxon>
        <taxon>Vertebrata</taxon>
        <taxon>Euteleostomi</taxon>
        <taxon>Mammalia</taxon>
        <taxon>Eutheria</taxon>
        <taxon>Euarchontoglires</taxon>
        <taxon>Glires</taxon>
        <taxon>Rodentia</taxon>
        <taxon>Myomorpha</taxon>
        <taxon>Muroidea</taxon>
        <taxon>Muridae</taxon>
        <taxon>Murinae</taxon>
        <taxon>Rattus</taxon>
    </lineage>
</organism>
<feature type="initiator methionine" description="Removed" evidence="4">
    <location>
        <position position="1"/>
    </location>
</feature>
<feature type="chain" id="PRO_0000058157" description="Platelet-activating factor acetylhydrolase IB subunit alpha1">
    <location>
        <begin position="2"/>
        <end position="232"/>
    </location>
</feature>
<feature type="region of interest" description="Disordered" evidence="7">
    <location>
        <begin position="1"/>
        <end position="20"/>
    </location>
</feature>
<feature type="active site" evidence="5">
    <location>
        <position position="48"/>
    </location>
</feature>
<feature type="active site" evidence="5">
    <location>
        <position position="193"/>
    </location>
</feature>
<feature type="active site" evidence="5">
    <location>
        <position position="196"/>
    </location>
</feature>
<feature type="modified residue" description="N-acetylserine" evidence="4">
    <location>
        <position position="2"/>
    </location>
</feature>
<feature type="modified residue" description="Phosphoserine" evidence="4">
    <location>
        <position position="2"/>
    </location>
</feature>
<comment type="function">
    <text evidence="5 8">Alpha1 catalytic subunit of the cytosolic type I platelet-activating factor (PAF) acetylhydrolase (PAF-AH (I)) heterotetrameric enzyme that catalyzes the hydrolyze of the acetyl group at the sn-2 position of PAF and its analogs and modulates the action of PAF (PubMed:9660828). The activity and substrate specificity of PAF-AH (I) are affected by its subunit composition. Both alpha1/alpha1 homodimer (PAFAH1B3/PAFAH1B3 homodimer) and alpha1/alpha2 heterodimer(PAFAH1B3/PAFAH1B2 heterodimer) hydrolyze 1-O-alkyl-2-acetyl-sn-glycero-3-phosphoric acid (AAGPA) more efficiently than PAF, but they have little hydrolytic activity towards 1-O-alkyl-2-acetyl-sn-glycero-3-phosphorylethanolamine (AAGPE). Plays an important role during the development of brain (By similarity).</text>
</comment>
<comment type="catalytic activity">
    <reaction evidence="8">
        <text>a 1-O-alkyl-2-acetyl-sn-glycero-3-phosphocholine + H2O = a 1-O-alkyl-sn-glycero-3-phosphocholine + acetate + H(+)</text>
        <dbReference type="Rhea" id="RHEA:17777"/>
        <dbReference type="ChEBI" id="CHEBI:15377"/>
        <dbReference type="ChEBI" id="CHEBI:15378"/>
        <dbReference type="ChEBI" id="CHEBI:30089"/>
        <dbReference type="ChEBI" id="CHEBI:30909"/>
        <dbReference type="ChEBI" id="CHEBI:36707"/>
        <dbReference type="EC" id="3.1.1.47"/>
    </reaction>
    <physiologicalReaction direction="left-to-right" evidence="11">
        <dbReference type="Rhea" id="RHEA:17778"/>
    </physiologicalReaction>
</comment>
<comment type="catalytic activity">
    <reaction evidence="8">
        <text>1-O-hexadecyl-2-acetyl-sn-glycero-3-phosphocholine + H2O = 1-O-hexadecyl-sn-glycero-3-phosphocholine + acetate + H(+)</text>
        <dbReference type="Rhea" id="RHEA:40479"/>
        <dbReference type="ChEBI" id="CHEBI:15377"/>
        <dbReference type="ChEBI" id="CHEBI:15378"/>
        <dbReference type="ChEBI" id="CHEBI:30089"/>
        <dbReference type="ChEBI" id="CHEBI:44811"/>
        <dbReference type="ChEBI" id="CHEBI:64496"/>
    </reaction>
    <physiologicalReaction direction="left-to-right" evidence="11">
        <dbReference type="Rhea" id="RHEA:40480"/>
    </physiologicalReaction>
</comment>
<comment type="catalytic activity">
    <reaction evidence="5">
        <text>1-O-hexadecyl-2-acetyl-sn-glycero-3-phosphate + H2O = 1-O-hexadecyl-sn-glycero-3-phosphate + acetate + H(+)</text>
        <dbReference type="Rhea" id="RHEA:41704"/>
        <dbReference type="ChEBI" id="CHEBI:15377"/>
        <dbReference type="ChEBI" id="CHEBI:15378"/>
        <dbReference type="ChEBI" id="CHEBI:30089"/>
        <dbReference type="ChEBI" id="CHEBI:77580"/>
        <dbReference type="ChEBI" id="CHEBI:78385"/>
    </reaction>
    <physiologicalReaction direction="left-to-right" evidence="5">
        <dbReference type="Rhea" id="RHEA:41705"/>
    </physiologicalReaction>
</comment>
<comment type="activity regulation">
    <text evidence="5">Beta subunit (PAFAH1B1) inhibits the acetylhydrolase activity of the alpha1/alpha1 catalytic homodimer.</text>
</comment>
<comment type="subunit">
    <text evidence="5 6 8">Forms a catalytic dimer which is either homodimer (alpha1/alpha1 homodimer) or heterodimer with PAFAH1B2 (alpha1/alpha2 heterodimer) (PubMed:9660828). Component of the cytosolic (PAF-AH (I)) heterotetrameric enzyme, which is composed of PAFAH1B1 (beta), PAFAH1B2 (alpha2) and PAFAH1B3 (alpha1) subunits. The catalytic activity of the enzyme resides in the alpha1 (PAFAH1B3) and alpha2 (PAFAH1B2) subunits, whereas the beta subunit (PAFAH1B1) has regulatory activity. Trimer formation is not essential for the catalytic activity (By similarity). Interacts with VLDLR; this interaction may modulate the Reelin pathway (By similarity).</text>
</comment>
<comment type="subcellular location">
    <subcellularLocation>
        <location evidence="1">Cytoplasm</location>
    </subcellularLocation>
</comment>
<comment type="tissue specificity">
    <text evidence="8">Expressed in brain, spleen, lung, liver, kidney and testis. Not expressed in heart and skeletal muscle. Expressed in fetal brain as heterodimer (PubMed:9660828). Not expressed in adult tissues (PubMed:9660828). Expressed exclusively in granule cells (PubMed:9660828).</text>
</comment>
<comment type="developmental stage">
    <text evidence="8">During the embryonic stages, high expressed in the brain, spinal cord, sensory ganglia (dorsal root and trigeminal ganglia), and thymus. In brain found throughout the ventricular and marginal zones. Expressed mainly in neural tissues.</text>
</comment>
<comment type="miscellaneous">
    <text evidence="2 3 4 9">Originally the subunits of the type I platelet-activating factor (PAF) acetylhydrolase was named alpha (PAFAH1B1), beta (PAFAH1B2) and gamma (PAFAH1B3) (By similarity). Now these subunits have been renamed beta (PAFAH1B1), alpha2 (PAFAH1B2) and alpha1 (PAFAH1B3) respectively (PubMed:9459487).</text>
</comment>
<comment type="similarity">
    <text evidence="10">Belongs to the 'GDSL' lipolytic enzyme family. Platelet-activating factor acetylhydrolase IB beta/gamma subunits subfamily.</text>
</comment>
<reference key="1">
    <citation type="journal article" date="1998" name="Biochim. Biophys. Acta">
        <title>Molecular cloning of cDNAs encoding alpha1, alpha2, and beta subunits of rat brain platelet-activating factor acetylhydrolase.</title>
        <authorList>
            <person name="Watanabe M."/>
            <person name="Aoki J."/>
            <person name="Manya H."/>
            <person name="Arai H."/>
            <person name="Inoue K."/>
        </authorList>
    </citation>
    <scope>NUCLEOTIDE SEQUENCE [MRNA]</scope>
    <source>
        <strain>Wistar</strain>
        <tissue>Brain</tissue>
    </source>
</reference>
<reference key="2">
    <citation type="journal article" date="1998" name="J. Biol. Chem.">
        <title>Switching of platelet-activating factor acetylhydrolase catalytic subunits in developing rat brain.</title>
        <authorList>
            <person name="Manya H."/>
            <person name="Aoki J."/>
            <person name="Watanabe M."/>
            <person name="Adachi T."/>
            <person name="Asou H."/>
            <person name="Inoue Y."/>
            <person name="Arai H."/>
            <person name="Inoue K."/>
        </authorList>
    </citation>
    <scope>TISSUE SPECIFICITY</scope>
    <scope>FUNCTION</scope>
    <scope>CATALYTIC ACTIVITY</scope>
    <scope>SUBUNIT</scope>
    <scope>DEVELOPMENTAL STAGE</scope>
</reference>
<protein>
    <recommendedName>
        <fullName evidence="10">Platelet-activating factor acetylhydrolase IB subunit alpha1</fullName>
        <ecNumber evidence="8">3.1.1.47</ecNumber>
    </recommendedName>
    <alternativeName>
        <fullName>PAF acetylhydrolase 29 kDa subunit</fullName>
        <shortName>PAF-AH 29 kDa subunit</shortName>
    </alternativeName>
    <alternativeName>
        <fullName>PAF-AH subunit gamma</fullName>
        <shortName>PAFAH subunit gamma</shortName>
    </alternativeName>
    <alternativeName>
        <fullName>Platelet-activating factor acetylhydrolase alpha 1 subunit</fullName>
        <shortName>PAF-AH alpha 1</shortName>
    </alternativeName>
</protein>